<accession>Q0P8J1</accession>
<name>HDDC_CAMJE</name>
<dbReference type="EC" id="2.7.7.71" evidence="1"/>
<dbReference type="EMBL" id="AL111168">
    <property type="protein sequence ID" value="CAL35532.1"/>
    <property type="molecule type" value="Genomic_DNA"/>
</dbReference>
<dbReference type="PIR" id="G81287">
    <property type="entry name" value="G81287"/>
</dbReference>
<dbReference type="RefSeq" id="WP_002857908.1">
    <property type="nucleotide sequence ID" value="NZ_SZUC01000003.1"/>
</dbReference>
<dbReference type="RefSeq" id="YP_002344806.1">
    <property type="nucleotide sequence ID" value="NC_002163.1"/>
</dbReference>
<dbReference type="SMR" id="Q0P8J1"/>
<dbReference type="IntAct" id="Q0P8J1">
    <property type="interactions" value="3"/>
</dbReference>
<dbReference type="STRING" id="192222.Cj1423c"/>
<dbReference type="PaxDb" id="192222-Cj1423c"/>
<dbReference type="EnsemblBacteria" id="CAL35532">
    <property type="protein sequence ID" value="CAL35532"/>
    <property type="gene ID" value="Cj1423c"/>
</dbReference>
<dbReference type="GeneID" id="905712"/>
<dbReference type="KEGG" id="cje:Cj1423c"/>
<dbReference type="PATRIC" id="fig|192222.6.peg.1404"/>
<dbReference type="eggNOG" id="COG1208">
    <property type="taxonomic scope" value="Bacteria"/>
</dbReference>
<dbReference type="HOGENOM" id="CLU_029499_2_0_7"/>
<dbReference type="OrthoDB" id="9806359at2"/>
<dbReference type="STRENDA-DB" id="KAFQUT">
    <property type="experiment" value="Characterization of Cj1423"/>
</dbReference>
<dbReference type="UniPathway" id="UPA00543">
    <property type="reaction ID" value="UER00608"/>
</dbReference>
<dbReference type="UniPathway" id="UPA00934"/>
<dbReference type="Proteomes" id="UP000000799">
    <property type="component" value="Chromosome"/>
</dbReference>
<dbReference type="GO" id="GO:0005525">
    <property type="term" value="F:GTP binding"/>
    <property type="evidence" value="ECO:0007669"/>
    <property type="project" value="UniProtKB-KW"/>
</dbReference>
<dbReference type="GO" id="GO:0070568">
    <property type="term" value="F:guanylyltransferase activity"/>
    <property type="evidence" value="ECO:0000314"/>
    <property type="project" value="UniProtKB"/>
</dbReference>
<dbReference type="GO" id="GO:0045227">
    <property type="term" value="P:capsule polysaccharide biosynthetic process"/>
    <property type="evidence" value="ECO:0000305"/>
    <property type="project" value="UniProtKB"/>
</dbReference>
<dbReference type="GO" id="GO:0009298">
    <property type="term" value="P:GDP-mannose biosynthetic process"/>
    <property type="evidence" value="ECO:0000314"/>
    <property type="project" value="UniProtKB"/>
</dbReference>
<dbReference type="GO" id="GO:0009226">
    <property type="term" value="P:nucleotide-sugar biosynthetic process"/>
    <property type="evidence" value="ECO:0000314"/>
    <property type="project" value="UniProtKB"/>
</dbReference>
<dbReference type="CDD" id="cd06915">
    <property type="entry name" value="NTP_transferase_WcbM_like"/>
    <property type="match status" value="1"/>
</dbReference>
<dbReference type="Gene3D" id="3.90.550.10">
    <property type="entry name" value="Spore Coat Polysaccharide Biosynthesis Protein SpsA, Chain A"/>
    <property type="match status" value="1"/>
</dbReference>
<dbReference type="InterPro" id="IPR050486">
    <property type="entry name" value="Mannose-1P_guanyltransferase"/>
</dbReference>
<dbReference type="InterPro" id="IPR005835">
    <property type="entry name" value="NTP_transferase_dom"/>
</dbReference>
<dbReference type="InterPro" id="IPR029044">
    <property type="entry name" value="Nucleotide-diphossugar_trans"/>
</dbReference>
<dbReference type="PANTHER" id="PTHR22572">
    <property type="entry name" value="SUGAR-1-PHOSPHATE GUANYL TRANSFERASE"/>
    <property type="match status" value="1"/>
</dbReference>
<dbReference type="Pfam" id="PF00483">
    <property type="entry name" value="NTP_transferase"/>
    <property type="match status" value="1"/>
</dbReference>
<dbReference type="SUPFAM" id="SSF53448">
    <property type="entry name" value="Nucleotide-diphospho-sugar transferases"/>
    <property type="match status" value="1"/>
</dbReference>
<keyword id="KW-0972">Capsule biogenesis/degradation</keyword>
<keyword id="KW-0119">Carbohydrate metabolism</keyword>
<keyword id="KW-0342">GTP-binding</keyword>
<keyword id="KW-0547">Nucleotide-binding</keyword>
<keyword id="KW-0548">Nucleotidyltransferase</keyword>
<keyword id="KW-1185">Reference proteome</keyword>
<keyword id="KW-0808">Transferase</keyword>
<proteinExistence type="evidence at protein level"/>
<reference evidence="5 6" key="1">
    <citation type="journal article" date="2000" name="Nature">
        <title>The genome sequence of the food-borne pathogen Campylobacter jejuni reveals hypervariable sequences.</title>
        <authorList>
            <person name="Parkhill J."/>
            <person name="Wren B.W."/>
            <person name="Mungall K.L."/>
            <person name="Ketley J.M."/>
            <person name="Churcher C.M."/>
            <person name="Basham D."/>
            <person name="Chillingworth T."/>
            <person name="Davies R.M."/>
            <person name="Feltwell T."/>
            <person name="Holroyd S."/>
            <person name="Jagels K."/>
            <person name="Karlyshev A.V."/>
            <person name="Moule S."/>
            <person name="Pallen M.J."/>
            <person name="Penn C.W."/>
            <person name="Quail M.A."/>
            <person name="Rajandream M.A."/>
            <person name="Rutherford K.M."/>
            <person name="van Vliet A.H.M."/>
            <person name="Whitehead S."/>
            <person name="Barrell B.G."/>
        </authorList>
    </citation>
    <scope>NUCLEOTIDE SEQUENCE [LARGE SCALE GENOMIC DNA]</scope>
    <source>
        <strain evidence="6">ATCC 700819 / NCTC 11168</strain>
    </source>
</reference>
<reference key="2">
    <citation type="journal article" date="2019" name="Biochemistry">
        <title>Biosynthesis of GDP-d-glycero-alpha-d-manno-heptose for the Capsular Polysaccharide of Campylobacter jejuni.</title>
        <authorList>
            <person name="Huddleston J.P."/>
            <person name="Raushel F.M."/>
        </authorList>
    </citation>
    <scope>FUNCTION</scope>
    <scope>CATALYTIC ACTIVITY</scope>
    <scope>BIOPHYSICOCHEMICAL PROPERTIES</scope>
    <scope>PATHWAY</scope>
    <scope>BIOTECHNOLOGY</scope>
    <source>
        <strain evidence="2">ATCC 700819 / NCTC 11168</strain>
    </source>
</reference>
<comment type="function">
    <text evidence="1">Catalyzes the GDP transfer from GTP to D-glycero-alpha-D-manno-heptose 1-phosphate, yielding GDP-D-alpha-D-heptose. Is able to use ATP, CTP or UTP as substrate in the presence of pyrophosphatase, but at a significantly slower rate. Can also form GDP-alpha-D-mannose from alpha-D-mannose 1-phosphate and GTP.</text>
</comment>
<comment type="catalytic activity">
    <reaction evidence="1">
        <text>D-glycero-alpha-D-manno-heptose 1-phosphate + GTP + H(+) = GDP-D-glycero-alpha-D-manno-heptose + diphosphate</text>
        <dbReference type="Rhea" id="RHEA:27461"/>
        <dbReference type="ChEBI" id="CHEBI:15378"/>
        <dbReference type="ChEBI" id="CHEBI:33019"/>
        <dbReference type="ChEBI" id="CHEBI:37565"/>
        <dbReference type="ChEBI" id="CHEBI:59971"/>
        <dbReference type="ChEBI" id="CHEBI:61574"/>
        <dbReference type="EC" id="2.7.7.71"/>
    </reaction>
</comment>
<comment type="biophysicochemical properties">
    <kinetics>
        <KM evidence="1">495 uM for D-glycero-alpha-D-manno-heptose 1-phosphate (at pH 7.4 and 25 degrees Celsius)</KM>
        <text evidence="1">kcat is 3.0 sec(-1) and 1.35 sec(-1) for D-glycero-alpha-D-manno-heptose 1-phosphate determined by 31P NMR and HPLC method, respectively.</text>
    </kinetics>
</comment>
<comment type="pathway">
    <text evidence="1">Nucleotide-sugar biosynthesis; GDP-D-glycero-alpha-D-manno-heptose biosynthesis; GDP-D-glycero-alpha-D-manno-heptose from D-glycero-alpha-D-manno-heptose 7-phosphate: step 3/3.</text>
</comment>
<comment type="pathway">
    <text evidence="4">Capsule biogenesis; capsule polysaccharide biosynthesis.</text>
</comment>
<comment type="biotechnology">
    <text evidence="1">This enzyme is used in a preparative method to synthesize ample amount of GDP-D-glycero-alpha-D-manno-heptose to be used in elucidating biosynthetic pathways of various heptose components present in capsular polysaccharide (CPS) of C.jejuni.</text>
</comment>
<comment type="similarity">
    <text evidence="3">Belongs to the D-alpha-D-heptose-1-P guanylyltransferase family.</text>
</comment>
<gene>
    <name evidence="5" type="primary">hddC</name>
    <name evidence="5" type="ordered locus">Cj1423c</name>
</gene>
<organism evidence="5">
    <name type="scientific">Campylobacter jejuni subsp. jejuni serotype O:2 (strain ATCC 700819 / NCTC 11168)</name>
    <dbReference type="NCBI Taxonomy" id="192222"/>
    <lineage>
        <taxon>Bacteria</taxon>
        <taxon>Pseudomonadati</taxon>
        <taxon>Campylobacterota</taxon>
        <taxon>Epsilonproteobacteria</taxon>
        <taxon>Campylobacterales</taxon>
        <taxon>Campylobacteraceae</taxon>
        <taxon>Campylobacter</taxon>
    </lineage>
</organism>
<protein>
    <recommendedName>
        <fullName evidence="2">D-glycero-alpha-D-manno-heptose 1-phosphate guanylyltransferase</fullName>
        <ecNumber evidence="1">2.7.7.71</ecNumber>
    </recommendedName>
    <alternativeName>
        <fullName evidence="3">D-alpha-D-heptose 1-phosphate guanylyltransferase</fullName>
    </alternativeName>
</protein>
<sequence length="221" mass="25664">MQAIILCGGLGTRLKSIIKDIPKPMAPINDKPFLEFIFEYLKKQGIKEVILAVSYKYEVIKEYFKDEFLGIKIKYSIEKEPLGTGGAIKETLKFVKNEAYVLNGDTFFDIDLSKLKLNESKICLALKQMNDFDRYGTVNVDEQDLVISFEEKVFKKQGLINGGIYLLTKDIFNDFALQEKFSFEEFLQENYKKLKARACIFDDYFIDIGVPEDYYHFLINN</sequence>
<feature type="chain" id="PRO_0000454935" description="D-glycero-alpha-D-manno-heptose 1-phosphate guanylyltransferase">
    <location>
        <begin position="1"/>
        <end position="221"/>
    </location>
</feature>
<evidence type="ECO:0000269" key="1">
    <source>
    </source>
</evidence>
<evidence type="ECO:0000303" key="2">
    <source>
    </source>
</evidence>
<evidence type="ECO:0000305" key="3"/>
<evidence type="ECO:0000305" key="4">
    <source>
    </source>
</evidence>
<evidence type="ECO:0000312" key="5">
    <source>
        <dbReference type="EMBL" id="CAL35532.1"/>
    </source>
</evidence>
<evidence type="ECO:0000312" key="6">
    <source>
        <dbReference type="Proteomes" id="UP000000799"/>
    </source>
</evidence>